<accession>Q8CI03</accession>
<accession>E9QKQ2</accession>
<accession>Q3TH83</accession>
<accession>Q6ZPN0</accession>
<accession>Q8C792</accession>
<protein>
    <recommendedName>
        <fullName>FLYWCH-type zinc finger-containing protein 1</fullName>
    </recommendedName>
</protein>
<reference key="1">
    <citation type="journal article" date="2005" name="Science">
        <title>The transcriptional landscape of the mammalian genome.</title>
        <authorList>
            <person name="Carninci P."/>
            <person name="Kasukawa T."/>
            <person name="Katayama S."/>
            <person name="Gough J."/>
            <person name="Frith M.C."/>
            <person name="Maeda N."/>
            <person name="Oyama R."/>
            <person name="Ravasi T."/>
            <person name="Lenhard B."/>
            <person name="Wells C."/>
            <person name="Kodzius R."/>
            <person name="Shimokawa K."/>
            <person name="Bajic V.B."/>
            <person name="Brenner S.E."/>
            <person name="Batalov S."/>
            <person name="Forrest A.R."/>
            <person name="Zavolan M."/>
            <person name="Davis M.J."/>
            <person name="Wilming L.G."/>
            <person name="Aidinis V."/>
            <person name="Allen J.E."/>
            <person name="Ambesi-Impiombato A."/>
            <person name="Apweiler R."/>
            <person name="Aturaliya R.N."/>
            <person name="Bailey T.L."/>
            <person name="Bansal M."/>
            <person name="Baxter L."/>
            <person name="Beisel K.W."/>
            <person name="Bersano T."/>
            <person name="Bono H."/>
            <person name="Chalk A.M."/>
            <person name="Chiu K.P."/>
            <person name="Choudhary V."/>
            <person name="Christoffels A."/>
            <person name="Clutterbuck D.R."/>
            <person name="Crowe M.L."/>
            <person name="Dalla E."/>
            <person name="Dalrymple B.P."/>
            <person name="de Bono B."/>
            <person name="Della Gatta G."/>
            <person name="di Bernardo D."/>
            <person name="Down T."/>
            <person name="Engstrom P."/>
            <person name="Fagiolini M."/>
            <person name="Faulkner G."/>
            <person name="Fletcher C.F."/>
            <person name="Fukushima T."/>
            <person name="Furuno M."/>
            <person name="Futaki S."/>
            <person name="Gariboldi M."/>
            <person name="Georgii-Hemming P."/>
            <person name="Gingeras T.R."/>
            <person name="Gojobori T."/>
            <person name="Green R.E."/>
            <person name="Gustincich S."/>
            <person name="Harbers M."/>
            <person name="Hayashi Y."/>
            <person name="Hensch T.K."/>
            <person name="Hirokawa N."/>
            <person name="Hill D."/>
            <person name="Huminiecki L."/>
            <person name="Iacono M."/>
            <person name="Ikeo K."/>
            <person name="Iwama A."/>
            <person name="Ishikawa T."/>
            <person name="Jakt M."/>
            <person name="Kanapin A."/>
            <person name="Katoh M."/>
            <person name="Kawasawa Y."/>
            <person name="Kelso J."/>
            <person name="Kitamura H."/>
            <person name="Kitano H."/>
            <person name="Kollias G."/>
            <person name="Krishnan S.P."/>
            <person name="Kruger A."/>
            <person name="Kummerfeld S.K."/>
            <person name="Kurochkin I.V."/>
            <person name="Lareau L.F."/>
            <person name="Lazarevic D."/>
            <person name="Lipovich L."/>
            <person name="Liu J."/>
            <person name="Liuni S."/>
            <person name="McWilliam S."/>
            <person name="Madan Babu M."/>
            <person name="Madera M."/>
            <person name="Marchionni L."/>
            <person name="Matsuda H."/>
            <person name="Matsuzawa S."/>
            <person name="Miki H."/>
            <person name="Mignone F."/>
            <person name="Miyake S."/>
            <person name="Morris K."/>
            <person name="Mottagui-Tabar S."/>
            <person name="Mulder N."/>
            <person name="Nakano N."/>
            <person name="Nakauchi H."/>
            <person name="Ng P."/>
            <person name="Nilsson R."/>
            <person name="Nishiguchi S."/>
            <person name="Nishikawa S."/>
            <person name="Nori F."/>
            <person name="Ohara O."/>
            <person name="Okazaki Y."/>
            <person name="Orlando V."/>
            <person name="Pang K.C."/>
            <person name="Pavan W.J."/>
            <person name="Pavesi G."/>
            <person name="Pesole G."/>
            <person name="Petrovsky N."/>
            <person name="Piazza S."/>
            <person name="Reed J."/>
            <person name="Reid J.F."/>
            <person name="Ring B.Z."/>
            <person name="Ringwald M."/>
            <person name="Rost B."/>
            <person name="Ruan Y."/>
            <person name="Salzberg S.L."/>
            <person name="Sandelin A."/>
            <person name="Schneider C."/>
            <person name="Schoenbach C."/>
            <person name="Sekiguchi K."/>
            <person name="Semple C.A."/>
            <person name="Seno S."/>
            <person name="Sessa L."/>
            <person name="Sheng Y."/>
            <person name="Shibata Y."/>
            <person name="Shimada H."/>
            <person name="Shimada K."/>
            <person name="Silva D."/>
            <person name="Sinclair B."/>
            <person name="Sperling S."/>
            <person name="Stupka E."/>
            <person name="Sugiura K."/>
            <person name="Sultana R."/>
            <person name="Takenaka Y."/>
            <person name="Taki K."/>
            <person name="Tammoja K."/>
            <person name="Tan S.L."/>
            <person name="Tang S."/>
            <person name="Taylor M.S."/>
            <person name="Tegner J."/>
            <person name="Teichmann S.A."/>
            <person name="Ueda H.R."/>
            <person name="van Nimwegen E."/>
            <person name="Verardo R."/>
            <person name="Wei C.L."/>
            <person name="Yagi K."/>
            <person name="Yamanishi H."/>
            <person name="Zabarovsky E."/>
            <person name="Zhu S."/>
            <person name="Zimmer A."/>
            <person name="Hide W."/>
            <person name="Bult C."/>
            <person name="Grimmond S.M."/>
            <person name="Teasdale R.D."/>
            <person name="Liu E.T."/>
            <person name="Brusic V."/>
            <person name="Quackenbush J."/>
            <person name="Wahlestedt C."/>
            <person name="Mattick J.S."/>
            <person name="Hume D.A."/>
            <person name="Kai C."/>
            <person name="Sasaki D."/>
            <person name="Tomaru Y."/>
            <person name="Fukuda S."/>
            <person name="Kanamori-Katayama M."/>
            <person name="Suzuki M."/>
            <person name="Aoki J."/>
            <person name="Arakawa T."/>
            <person name="Iida J."/>
            <person name="Imamura K."/>
            <person name="Itoh M."/>
            <person name="Kato T."/>
            <person name="Kawaji H."/>
            <person name="Kawagashira N."/>
            <person name="Kawashima T."/>
            <person name="Kojima M."/>
            <person name="Kondo S."/>
            <person name="Konno H."/>
            <person name="Nakano K."/>
            <person name="Ninomiya N."/>
            <person name="Nishio T."/>
            <person name="Okada M."/>
            <person name="Plessy C."/>
            <person name="Shibata K."/>
            <person name="Shiraki T."/>
            <person name="Suzuki S."/>
            <person name="Tagami M."/>
            <person name="Waki K."/>
            <person name="Watahiki A."/>
            <person name="Okamura-Oho Y."/>
            <person name="Suzuki H."/>
            <person name="Kawai J."/>
            <person name="Hayashizaki Y."/>
        </authorList>
    </citation>
    <scope>NUCLEOTIDE SEQUENCE [LARGE SCALE MRNA] (ISOFORM 1)</scope>
    <scope>NUCLEOTIDE SEQUENCE [LARGE SCALE MRNA] OF 1-666 (ISOFORM 3)</scope>
    <source>
        <strain>C57BL/6J</strain>
        <tissue>Heart</tissue>
        <tissue>Kidney</tissue>
    </source>
</reference>
<reference key="2">
    <citation type="journal article" date="2009" name="PLoS Biol.">
        <title>Lineage-specific biology revealed by a finished genome assembly of the mouse.</title>
        <authorList>
            <person name="Church D.M."/>
            <person name="Goodstadt L."/>
            <person name="Hillier L.W."/>
            <person name="Zody M.C."/>
            <person name="Goldstein S."/>
            <person name="She X."/>
            <person name="Bult C.J."/>
            <person name="Agarwala R."/>
            <person name="Cherry J.L."/>
            <person name="DiCuccio M."/>
            <person name="Hlavina W."/>
            <person name="Kapustin Y."/>
            <person name="Meric P."/>
            <person name="Maglott D."/>
            <person name="Birtle Z."/>
            <person name="Marques A.C."/>
            <person name="Graves T."/>
            <person name="Zhou S."/>
            <person name="Teague B."/>
            <person name="Potamousis K."/>
            <person name="Churas C."/>
            <person name="Place M."/>
            <person name="Herschleb J."/>
            <person name="Runnheim R."/>
            <person name="Forrest D."/>
            <person name="Amos-Landgraf J."/>
            <person name="Schwartz D.C."/>
            <person name="Cheng Z."/>
            <person name="Lindblad-Toh K."/>
            <person name="Eichler E.E."/>
            <person name="Ponting C.P."/>
        </authorList>
    </citation>
    <scope>NUCLEOTIDE SEQUENCE [LARGE SCALE GENOMIC DNA]</scope>
    <source>
        <strain>C57BL/6J</strain>
    </source>
</reference>
<reference key="3">
    <citation type="journal article" date="2004" name="Genome Res.">
        <title>The status, quality, and expansion of the NIH full-length cDNA project: the Mammalian Gene Collection (MGC).</title>
        <authorList>
            <consortium name="The MGC Project Team"/>
        </authorList>
    </citation>
    <scope>NUCLEOTIDE SEQUENCE [LARGE SCALE MRNA]</scope>
    <source>
        <strain>Czech II</strain>
        <tissue>Mammary tumor</tissue>
    </source>
</reference>
<reference key="4">
    <citation type="journal article" date="2003" name="DNA Res.">
        <title>Prediction of the coding sequences of mouse homologues of KIAA gene: III. The complete nucleotide sequences of 500 mouse KIAA-homologous cDNAs identified by screening of terminal sequences of cDNA clones randomly sampled from size-fractionated libraries.</title>
        <authorList>
            <person name="Okazaki N."/>
            <person name="Kikuno R."/>
            <person name="Ohara R."/>
            <person name="Inamoto S."/>
            <person name="Koseki H."/>
            <person name="Hiraoka S."/>
            <person name="Saga Y."/>
            <person name="Nagase T."/>
            <person name="Ohara O."/>
            <person name="Koga H."/>
        </authorList>
    </citation>
    <scope>NUCLEOTIDE SEQUENCE [LARGE SCALE MRNA] OF 193-673 (ISOFORM 2)</scope>
    <source>
        <tissue>Brain</tissue>
    </source>
</reference>
<reference key="5">
    <citation type="journal article" date="2010" name="Cell">
        <title>A tissue-specific atlas of mouse protein phosphorylation and expression.</title>
        <authorList>
            <person name="Huttlin E.L."/>
            <person name="Jedrychowski M.P."/>
            <person name="Elias J.E."/>
            <person name="Goswami T."/>
            <person name="Rad R."/>
            <person name="Beausoleil S.A."/>
            <person name="Villen J."/>
            <person name="Haas W."/>
            <person name="Sowa M.E."/>
            <person name="Gygi S.P."/>
        </authorList>
    </citation>
    <scope>PHOSPHORYLATION [LARGE SCALE ANALYSIS] AT SER-294</scope>
    <scope>IDENTIFICATION BY MASS SPECTROMETRY [LARGE SCALE ANALYSIS]</scope>
    <source>
        <tissue>Brain</tissue>
    </source>
</reference>
<evidence type="ECO:0000250" key="1">
    <source>
        <dbReference type="UniProtKB" id="Q4VC44"/>
    </source>
</evidence>
<evidence type="ECO:0000256" key="2">
    <source>
        <dbReference type="SAM" id="MobiDB-lite"/>
    </source>
</evidence>
<evidence type="ECO:0000303" key="3">
    <source>
    </source>
</evidence>
<evidence type="ECO:0000303" key="4">
    <source>
    </source>
</evidence>
<evidence type="ECO:0000305" key="5"/>
<evidence type="ECO:0007744" key="6">
    <source>
    </source>
</evidence>
<organism>
    <name type="scientific">Mus musculus</name>
    <name type="common">Mouse</name>
    <dbReference type="NCBI Taxonomy" id="10090"/>
    <lineage>
        <taxon>Eukaryota</taxon>
        <taxon>Metazoa</taxon>
        <taxon>Chordata</taxon>
        <taxon>Craniata</taxon>
        <taxon>Vertebrata</taxon>
        <taxon>Euteleostomi</taxon>
        <taxon>Mammalia</taxon>
        <taxon>Eutheria</taxon>
        <taxon>Euarchontoglires</taxon>
        <taxon>Glires</taxon>
        <taxon>Rodentia</taxon>
        <taxon>Myomorpha</taxon>
        <taxon>Muroidea</taxon>
        <taxon>Muridae</taxon>
        <taxon>Murinae</taxon>
        <taxon>Mus</taxon>
        <taxon>Mus</taxon>
    </lineage>
</organism>
<dbReference type="EMBL" id="AK052314">
    <property type="protein sequence ID" value="BAC34932.1"/>
    <property type="molecule type" value="mRNA"/>
</dbReference>
<dbReference type="EMBL" id="AK168389">
    <property type="protein sequence ID" value="BAE40315.1"/>
    <property type="status" value="ALT_FRAME"/>
    <property type="molecule type" value="mRNA"/>
</dbReference>
<dbReference type="EMBL" id="AC122821">
    <property type="status" value="NOT_ANNOTATED_CDS"/>
    <property type="molecule type" value="Genomic_DNA"/>
</dbReference>
<dbReference type="EMBL" id="BC038031">
    <property type="protein sequence ID" value="AAH38031.1"/>
    <property type="molecule type" value="mRNA"/>
</dbReference>
<dbReference type="EMBL" id="AK129391">
    <property type="protein sequence ID" value="BAC98201.1"/>
    <property type="molecule type" value="mRNA"/>
</dbReference>
<dbReference type="CCDS" id="CCDS28463.1">
    <molecule id="Q8CI03-1"/>
</dbReference>
<dbReference type="RefSeq" id="NP_001344922.1">
    <molecule id="Q8CI03-2"/>
    <property type="nucleotide sequence ID" value="NM_001357993.1"/>
</dbReference>
<dbReference type="RefSeq" id="NP_001344923.1">
    <molecule id="Q8CI03-2"/>
    <property type="nucleotide sequence ID" value="NM_001357994.1"/>
</dbReference>
<dbReference type="RefSeq" id="NP_722486.2">
    <molecule id="Q8CI03-1"/>
    <property type="nucleotide sequence ID" value="NM_153791.2"/>
</dbReference>
<dbReference type="RefSeq" id="XP_006524144.1">
    <property type="nucleotide sequence ID" value="XM_006524081.3"/>
</dbReference>
<dbReference type="RefSeq" id="XP_006524145.1">
    <molecule id="Q8CI03-2"/>
    <property type="nucleotide sequence ID" value="XM_006524082.5"/>
</dbReference>
<dbReference type="RefSeq" id="XP_006524146.1">
    <molecule id="Q8CI03-2"/>
    <property type="nucleotide sequence ID" value="XM_006524083.5"/>
</dbReference>
<dbReference type="SMR" id="Q8CI03"/>
<dbReference type="FunCoup" id="Q8CI03">
    <property type="interactions" value="414"/>
</dbReference>
<dbReference type="STRING" id="10090.ENSMUSP00000040022"/>
<dbReference type="GlyGen" id="Q8CI03">
    <property type="glycosylation" value="3 sites"/>
</dbReference>
<dbReference type="iPTMnet" id="Q8CI03"/>
<dbReference type="PhosphoSitePlus" id="Q8CI03"/>
<dbReference type="jPOST" id="Q8CI03"/>
<dbReference type="PaxDb" id="10090-ENSMUSP00000040022"/>
<dbReference type="PeptideAtlas" id="Q8CI03"/>
<dbReference type="ProteomicsDB" id="271814">
    <molecule id="Q8CI03-1"/>
</dbReference>
<dbReference type="ProteomicsDB" id="271815">
    <molecule id="Q8CI03-2"/>
</dbReference>
<dbReference type="ProteomicsDB" id="271816">
    <molecule id="Q8CI03-3"/>
</dbReference>
<dbReference type="Pumba" id="Q8CI03"/>
<dbReference type="Antibodypedia" id="23928">
    <property type="antibodies" value="52 antibodies from 14 providers"/>
</dbReference>
<dbReference type="DNASU" id="224613"/>
<dbReference type="Ensembl" id="ENSMUST00000045517.10">
    <molecule id="Q8CI03-1"/>
    <property type="protein sequence ID" value="ENSMUSP00000040022.9"/>
    <property type="gene ID" value="ENSMUSG00000040097.17"/>
</dbReference>
<dbReference type="Ensembl" id="ENSMUST00000086325.13">
    <molecule id="Q8CI03-1"/>
    <property type="protein sequence ID" value="ENSMUSP00000083505.6"/>
    <property type="gene ID" value="ENSMUSG00000040097.17"/>
</dbReference>
<dbReference type="GeneID" id="224613"/>
<dbReference type="KEGG" id="mmu:224613"/>
<dbReference type="UCSC" id="uc008ath.1">
    <molecule id="Q8CI03-2"/>
    <property type="organism name" value="mouse"/>
</dbReference>
<dbReference type="UCSC" id="uc008ati.1">
    <molecule id="Q8CI03-1"/>
    <property type="organism name" value="mouse"/>
</dbReference>
<dbReference type="AGR" id="MGI:2442638"/>
<dbReference type="CTD" id="84256"/>
<dbReference type="MGI" id="MGI:2442638">
    <property type="gene designation" value="Flywch1"/>
</dbReference>
<dbReference type="VEuPathDB" id="HostDB:ENSMUSG00000040097"/>
<dbReference type="eggNOG" id="ENOG502SQTE">
    <property type="taxonomic scope" value="Eukaryota"/>
</dbReference>
<dbReference type="GeneTree" id="ENSGT00530000064166"/>
<dbReference type="HOGENOM" id="CLU_023177_0_0_1"/>
<dbReference type="InParanoid" id="Q8CI03"/>
<dbReference type="OMA" id="NLAQWEG"/>
<dbReference type="OrthoDB" id="7962512at2759"/>
<dbReference type="TreeFam" id="TF337169"/>
<dbReference type="BioGRID-ORCS" id="224613">
    <property type="hits" value="3 hits in 76 CRISPR screens"/>
</dbReference>
<dbReference type="ChiTaRS" id="Flywch1">
    <property type="organism name" value="mouse"/>
</dbReference>
<dbReference type="PRO" id="PR:Q8CI03"/>
<dbReference type="Proteomes" id="UP000000589">
    <property type="component" value="Chromosome 17"/>
</dbReference>
<dbReference type="RNAct" id="Q8CI03">
    <property type="molecule type" value="protein"/>
</dbReference>
<dbReference type="Bgee" id="ENSMUSG00000040097">
    <property type="expression patterns" value="Expressed in superior frontal gyrus and 250 other cell types or tissues"/>
</dbReference>
<dbReference type="ExpressionAtlas" id="Q8CI03">
    <property type="expression patterns" value="baseline and differential"/>
</dbReference>
<dbReference type="GO" id="GO:0005829">
    <property type="term" value="C:cytosol"/>
    <property type="evidence" value="ECO:0007669"/>
    <property type="project" value="Ensembl"/>
</dbReference>
<dbReference type="GO" id="GO:0016604">
    <property type="term" value="C:nuclear body"/>
    <property type="evidence" value="ECO:0007669"/>
    <property type="project" value="Ensembl"/>
</dbReference>
<dbReference type="GO" id="GO:0005721">
    <property type="term" value="C:pericentric heterochromatin"/>
    <property type="evidence" value="ECO:0007669"/>
    <property type="project" value="Ensembl"/>
</dbReference>
<dbReference type="GO" id="GO:0005667">
    <property type="term" value="C:transcription regulator complex"/>
    <property type="evidence" value="ECO:0007669"/>
    <property type="project" value="Ensembl"/>
</dbReference>
<dbReference type="GO" id="GO:0003677">
    <property type="term" value="F:DNA binding"/>
    <property type="evidence" value="ECO:0007669"/>
    <property type="project" value="UniProtKB-KW"/>
</dbReference>
<dbReference type="GO" id="GO:0001223">
    <property type="term" value="F:transcription coactivator binding"/>
    <property type="evidence" value="ECO:0007669"/>
    <property type="project" value="Ensembl"/>
</dbReference>
<dbReference type="GO" id="GO:0003714">
    <property type="term" value="F:transcription corepressor activity"/>
    <property type="evidence" value="ECO:0007669"/>
    <property type="project" value="Ensembl"/>
</dbReference>
<dbReference type="GO" id="GO:0008270">
    <property type="term" value="F:zinc ion binding"/>
    <property type="evidence" value="ECO:0007669"/>
    <property type="project" value="UniProtKB-KW"/>
</dbReference>
<dbReference type="GO" id="GO:0006974">
    <property type="term" value="P:DNA damage response"/>
    <property type="evidence" value="ECO:0007669"/>
    <property type="project" value="Ensembl"/>
</dbReference>
<dbReference type="GO" id="GO:0000122">
    <property type="term" value="P:negative regulation of transcription by RNA polymerase II"/>
    <property type="evidence" value="ECO:0007669"/>
    <property type="project" value="Ensembl"/>
</dbReference>
<dbReference type="FunFam" id="2.20.25.240:FF:000001">
    <property type="entry name" value="FLYWCH-type zinc finger-containing protein 1"/>
    <property type="match status" value="4"/>
</dbReference>
<dbReference type="Gene3D" id="2.20.25.240">
    <property type="match status" value="5"/>
</dbReference>
<dbReference type="InterPro" id="IPR029279">
    <property type="entry name" value="FLYWCH_N"/>
</dbReference>
<dbReference type="InterPro" id="IPR040312">
    <property type="entry name" value="FWCH1/FWCH2"/>
</dbReference>
<dbReference type="InterPro" id="IPR007588">
    <property type="entry name" value="Znf_FLYWCH"/>
</dbReference>
<dbReference type="PANTHER" id="PTHR31665">
    <property type="entry name" value="FLYWCH FAMILY MEMBER 2-RELATED"/>
    <property type="match status" value="1"/>
</dbReference>
<dbReference type="PANTHER" id="PTHR31665:SF3">
    <property type="entry name" value="FLYWCH-TYPE ZINC FINGER-CONTAINING PROTEIN 1"/>
    <property type="match status" value="1"/>
</dbReference>
<dbReference type="Pfam" id="PF04500">
    <property type="entry name" value="FLYWCH"/>
    <property type="match status" value="5"/>
</dbReference>
<dbReference type="Pfam" id="PF15423">
    <property type="entry name" value="FLYWCH_N"/>
    <property type="match status" value="1"/>
</dbReference>
<dbReference type="Pfam" id="PF16662">
    <property type="entry name" value="FLYWCH_u"/>
    <property type="match status" value="1"/>
</dbReference>
<gene>
    <name type="primary">Flywch1</name>
    <name type="synonym">Kiaa1552</name>
</gene>
<feature type="chain" id="PRO_0000314461" description="FLYWCH-type zinc finger-containing protein 1">
    <location>
        <begin position="1"/>
        <end position="673"/>
    </location>
</feature>
<feature type="zinc finger region" description="FLYWCH-type 1">
    <location>
        <begin position="92"/>
        <end position="150"/>
    </location>
</feature>
<feature type="zinc finger region" description="FLYWCH-type 2">
    <location>
        <begin position="235"/>
        <end position="293"/>
    </location>
</feature>
<feature type="zinc finger region" description="FLYWCH-type 3">
    <location>
        <begin position="402"/>
        <end position="460"/>
    </location>
</feature>
<feature type="zinc finger region" description="FLYWCH-type 4">
    <location>
        <begin position="490"/>
        <end position="548"/>
    </location>
</feature>
<feature type="zinc finger region" description="FLYWCH-type 5">
    <location>
        <begin position="581"/>
        <end position="639"/>
    </location>
</feature>
<feature type="region of interest" description="Disordered" evidence="2">
    <location>
        <begin position="1"/>
        <end position="62"/>
    </location>
</feature>
<feature type="region of interest" description="Disordered" evidence="2">
    <location>
        <begin position="147"/>
        <end position="178"/>
    </location>
</feature>
<feature type="region of interest" description="Disordered" evidence="2">
    <location>
        <begin position="351"/>
        <end position="402"/>
    </location>
</feature>
<feature type="region of interest" description="Disordered" evidence="2">
    <location>
        <begin position="646"/>
        <end position="673"/>
    </location>
</feature>
<feature type="compositionally biased region" description="Polar residues" evidence="2">
    <location>
        <begin position="47"/>
        <end position="62"/>
    </location>
</feature>
<feature type="compositionally biased region" description="Basic and acidic residues" evidence="2">
    <location>
        <begin position="147"/>
        <end position="158"/>
    </location>
</feature>
<feature type="compositionally biased region" description="Basic residues" evidence="2">
    <location>
        <begin position="354"/>
        <end position="379"/>
    </location>
</feature>
<feature type="compositionally biased region" description="Basic residues" evidence="2">
    <location>
        <begin position="659"/>
        <end position="673"/>
    </location>
</feature>
<feature type="modified residue" description="Phosphoserine" evidence="1">
    <location>
        <position position="21"/>
    </location>
</feature>
<feature type="modified residue" description="Phosphoserine" evidence="6">
    <location>
        <position position="294"/>
    </location>
</feature>
<feature type="modified residue" description="Phosphoserine" evidence="1">
    <location>
        <position position="339"/>
    </location>
</feature>
<feature type="cross-link" description="Glycyl lysine isopeptide (Lys-Gly) (interchain with G-Cter in SUMO2)" evidence="1">
    <location>
        <position position="110"/>
    </location>
</feature>
<feature type="cross-link" description="Glycyl lysine isopeptide (Lys-Gly) (interchain with G-Cter in SUMO2)" evidence="1">
    <location>
        <position position="666"/>
    </location>
</feature>
<feature type="splice variant" id="VSP_030282" description="In isoform 3." evidence="4">
    <location>
        <begin position="1"/>
        <end position="287"/>
    </location>
</feature>
<feature type="splice variant" id="VSP_030283" description="In isoform 2." evidence="3">
    <original>IH</original>
    <variation>KSKSKN</variation>
    <location>
        <begin position="672"/>
        <end position="673"/>
    </location>
</feature>
<feature type="sequence conflict" description="In Ref. 3; AAH38031 and 4; BAC98201." evidence="5" ref="3 4">
    <original>I</original>
    <variation>T</variation>
    <location>
        <position position="200"/>
    </location>
</feature>
<feature type="sequence conflict" description="In Ref. 3; AAH38031 and 4; BAC98201." evidence="5" ref="3 4">
    <original>G</original>
    <variation>S</variation>
    <location>
        <position position="260"/>
    </location>
</feature>
<name>FWCH1_MOUSE</name>
<keyword id="KW-0025">Alternative splicing</keyword>
<keyword id="KW-0137">Centromere</keyword>
<keyword id="KW-0158">Chromosome</keyword>
<keyword id="KW-0238">DNA-binding</keyword>
<keyword id="KW-1017">Isopeptide bond</keyword>
<keyword id="KW-0479">Metal-binding</keyword>
<keyword id="KW-0539">Nucleus</keyword>
<keyword id="KW-0597">Phosphoprotein</keyword>
<keyword id="KW-1185">Reference proteome</keyword>
<keyword id="KW-0677">Repeat</keyword>
<keyword id="KW-0832">Ubl conjugation</keyword>
<keyword id="KW-0862">Zinc</keyword>
<keyword id="KW-0863">Zinc-finger</keyword>
<sequence length="673" mass="77096">MPLPEPSEQDCESLRAGQEPSVGARKPQESSNLVPARDKERPKPTDVASQETSSTATLPNNTLQVAPVKKQGRIIHRKRSRVDAVPPQPLEFLKTPFGGRLLVHKSFLYKQEKAVGDKVYWKCRQHSELSCRGRAITRGFRVTEMRDHCHPPEKEGLDRKKRHRGRPPSSALPEGAEVQEDEVSLWLYPVEPEPTPQPSIETPEEEQGYRSLALQSLPPKKRPTPGVVRYRPLEFLKTCYGGTFLVHQSFLYKREKTVGGKVYWTCREHAVHGCRSRAITQGQRVTVMRSHCHSPDIEGLQARRQQEKTIKKIQARRIGAGDLEDCDDIEDSLLQGVDSLFYRRGQGTLTLSRSKSKSKSKSRSKSKSKSRSRSRKRAKKQQESSQEPPEEDQDVDPRGPEFLKTPLGGNFLVYESFLYRREKVAGEKVYWTCRDQARMGCRSRAITQGRQVTVMRSHCHPPDLLGLETLRQREKRPGPSQWDGPEGPEFLKTPLGGSFLVYESFLYRREKATGDKVYWTCRDQARMGCRSRAITQGQRVMVMRRHCHPPDMGGLEALRQRENFPNLTHWEGPEPLQPLEFLRTSLGGRFLVYESFLYRKEKAAGEKVYWMCRDQARLGCRSRAITQGRRVMVMRSHCHPPDLAGLEALRQREKAPSAAKKKKKKKKKKKGIH</sequence>
<comment type="function">
    <text evidence="1">Transcription cofactor. Negatively regulates transcription activation by catenin beta-1 CTNNB1, perhaps acting by competing with TCF4 for CTNNB1 binding. May play a role in DNA-damage response signaling. Binds specifically to DNA sequences at peri-centromeric chromatin loci.</text>
</comment>
<comment type="subunit">
    <text evidence="1">Interacts with CTNNB1 (when unphosphorylated), perhaps preventing interaction of CTNNB1 with TCF4, and thereby regulating transcription activation; phosphorylation of CTNNB1 may inhibit the interaction.</text>
</comment>
<comment type="subcellular location">
    <subcellularLocation>
        <location evidence="1">Nucleus</location>
    </subcellularLocation>
    <subcellularLocation>
        <location evidence="1">Chromosome</location>
        <location evidence="1">Centromere</location>
    </subcellularLocation>
    <text evidence="1">Localized to peri-centromeric, H3K9me3-marked heterochromatin.</text>
</comment>
<comment type="alternative products">
    <event type="alternative splicing"/>
    <isoform>
        <id>Q8CI03-1</id>
        <name>1</name>
        <sequence type="displayed"/>
    </isoform>
    <isoform>
        <id>Q8CI03-2</id>
        <name>2</name>
        <sequence type="described" ref="VSP_030283"/>
    </isoform>
    <isoform>
        <id>Q8CI03-3</id>
        <name>3</name>
        <sequence type="described" ref="VSP_030282"/>
    </isoform>
</comment>
<comment type="sequence caution" evidence="5">
    <conflict type="frameshift">
        <sequence resource="EMBL-CDS" id="BAE40315"/>
    </conflict>
</comment>
<proteinExistence type="evidence at protein level"/>